<organism>
    <name type="scientific">Rattus norvegicus</name>
    <name type="common">Rat</name>
    <dbReference type="NCBI Taxonomy" id="10116"/>
    <lineage>
        <taxon>Eukaryota</taxon>
        <taxon>Metazoa</taxon>
        <taxon>Chordata</taxon>
        <taxon>Craniata</taxon>
        <taxon>Vertebrata</taxon>
        <taxon>Euteleostomi</taxon>
        <taxon>Mammalia</taxon>
        <taxon>Eutheria</taxon>
        <taxon>Euarchontoglires</taxon>
        <taxon>Glires</taxon>
        <taxon>Rodentia</taxon>
        <taxon>Myomorpha</taxon>
        <taxon>Muroidea</taxon>
        <taxon>Muridae</taxon>
        <taxon>Murinae</taxon>
        <taxon>Rattus</taxon>
    </lineage>
</organism>
<sequence length="301" mass="33286">MDLSELERDNTGRCRLSSPVPAVCLKEPCVLGVDEAGRGPVLGPMVYAICYCPLSRLADLEALKVADSKTLTENERERLFAKMEEDGDFVGWALDILSPNLISTSMLGRVKYNLNSMSHDTAAGLIQHAMDQNVKVTQVFVDTVGMPETYQARLQQRFPGIEVTVKAKADSLFPVVSAASIIAKVARDQAVKNWQFVESLQGLDSDYGSGYPNDPKTKAWLRKHVDPVFGFPQFVRFSWSTAQAILEKEAESVTWEDSAAEEDPEGPGRITSYFSQGPQACRPQVSHKYFQERGLETATSL</sequence>
<accession>Q5U209</accession>
<proteinExistence type="evidence at transcript level"/>
<reference key="1">
    <citation type="journal article" date="2004" name="Genome Res.">
        <title>The status, quality, and expansion of the NIH full-length cDNA project: the Mammalian Gene Collection (MGC).</title>
        <authorList>
            <consortium name="The MGC Project Team"/>
        </authorList>
    </citation>
    <scope>NUCLEOTIDE SEQUENCE [LARGE SCALE MRNA]</scope>
    <source>
        <tissue>Ovary</tissue>
        <tissue>Testis</tissue>
    </source>
</reference>
<evidence type="ECO:0000250" key="1"/>
<evidence type="ECO:0000250" key="2">
    <source>
        <dbReference type="UniProtKB" id="O75792"/>
    </source>
</evidence>
<evidence type="ECO:0000250" key="3">
    <source>
        <dbReference type="UniProtKB" id="Q9CWY8"/>
    </source>
</evidence>
<evidence type="ECO:0000255" key="4">
    <source>
        <dbReference type="PROSITE-ProRule" id="PRU01319"/>
    </source>
</evidence>
<evidence type="ECO:0000305" key="5"/>
<name>RNH2A_RAT</name>
<comment type="function">
    <text evidence="1">Catalytic subunit of RNase HII, an endonuclease that specifically degrades the RNA of RNA:DNA hybrids. Participates in DNA replication, possibly by mediating the removal of lagging-strand Okazaki fragment RNA primers during DNA replication. Mediates the excision of single ribonucleotides from DNA:RNA duplexes (By similarity).</text>
</comment>
<comment type="catalytic activity">
    <reaction>
        <text>Endonucleolytic cleavage to 5'-phosphomonoester.</text>
        <dbReference type="EC" id="3.1.26.4"/>
    </reaction>
</comment>
<comment type="cofactor">
    <cofactor evidence="1">
        <name>Mn(2+)</name>
        <dbReference type="ChEBI" id="CHEBI:29035"/>
    </cofactor>
    <cofactor evidence="1">
        <name>Mg(2+)</name>
        <dbReference type="ChEBI" id="CHEBI:18420"/>
    </cofactor>
    <text evidence="1">Manganese or magnesium. Binds 1 divalent metal ion per monomer in the absence of substrate. May bind a second metal ion after substrate binding.</text>
</comment>
<comment type="subunit">
    <text evidence="1">The RNase H2 complex is a heterotrimer composed of the catalytic subunit RNASEH2A and the non-catalytic subunits RNASEH2B and RNASEH2C.</text>
</comment>
<comment type="subcellular location">
    <subcellularLocation>
        <location evidence="1">Nucleus</location>
    </subcellularLocation>
</comment>
<comment type="similarity">
    <text evidence="5">Belongs to the RNase HII family. Eukaryotic subfamily.</text>
</comment>
<dbReference type="EC" id="3.1.26.4"/>
<dbReference type="EMBL" id="BC086345">
    <property type="protein sequence ID" value="AAH86345.1"/>
    <property type="molecule type" value="mRNA"/>
</dbReference>
<dbReference type="EMBL" id="BC086539">
    <property type="protein sequence ID" value="AAH86539.1"/>
    <property type="molecule type" value="mRNA"/>
</dbReference>
<dbReference type="RefSeq" id="NP_001013252.1">
    <property type="nucleotide sequence ID" value="NM_001013234.2"/>
</dbReference>
<dbReference type="RefSeq" id="XP_017456820.1">
    <property type="nucleotide sequence ID" value="XM_017601331.1"/>
</dbReference>
<dbReference type="RefSeq" id="XP_017456821.1">
    <property type="nucleotide sequence ID" value="XM_017601332.1"/>
</dbReference>
<dbReference type="RefSeq" id="XP_017456822.1">
    <property type="nucleotide sequence ID" value="XM_017601333.1"/>
</dbReference>
<dbReference type="RefSeq" id="XP_017456823.1">
    <property type="nucleotide sequence ID" value="XM_017601334.1"/>
</dbReference>
<dbReference type="RefSeq" id="XP_017456824.1">
    <property type="nucleotide sequence ID" value="XM_017601335.1"/>
</dbReference>
<dbReference type="RefSeq" id="XP_017456825.1">
    <property type="nucleotide sequence ID" value="XM_017601336.1"/>
</dbReference>
<dbReference type="RefSeq" id="XP_017456826.1">
    <property type="nucleotide sequence ID" value="XM_017601337.1"/>
</dbReference>
<dbReference type="RefSeq" id="XP_017456827.1">
    <property type="nucleotide sequence ID" value="XM_017601338.1"/>
</dbReference>
<dbReference type="SMR" id="Q5U209"/>
<dbReference type="FunCoup" id="Q5U209">
    <property type="interactions" value="1296"/>
</dbReference>
<dbReference type="STRING" id="10116.ENSRNOP00000049148"/>
<dbReference type="PhosphoSitePlus" id="Q5U209"/>
<dbReference type="jPOST" id="Q5U209"/>
<dbReference type="PaxDb" id="10116-ENSRNOP00000049148"/>
<dbReference type="Ensembl" id="ENSRNOT00000046181.5">
    <property type="protein sequence ID" value="ENSRNOP00000049148.3"/>
    <property type="gene ID" value="ENSRNOG00000068063.1"/>
</dbReference>
<dbReference type="GeneID" id="364974"/>
<dbReference type="KEGG" id="rno:364974"/>
<dbReference type="AGR" id="RGD:1307248"/>
<dbReference type="CTD" id="10535"/>
<dbReference type="RGD" id="1307248">
    <property type="gene designation" value="Rnaseh2a"/>
</dbReference>
<dbReference type="VEuPathDB" id="HostDB:ENSRNOG00000003504"/>
<dbReference type="eggNOG" id="KOG2299">
    <property type="taxonomic scope" value="Eukaryota"/>
</dbReference>
<dbReference type="GeneTree" id="ENSGT00390000010768"/>
<dbReference type="HOGENOM" id="CLU_036532_0_3_1"/>
<dbReference type="InParanoid" id="Q5U209"/>
<dbReference type="OrthoDB" id="7462577at2759"/>
<dbReference type="PhylomeDB" id="Q5U209"/>
<dbReference type="PRO" id="PR:Q5U209"/>
<dbReference type="Proteomes" id="UP000002494">
    <property type="component" value="Chromosome 19"/>
</dbReference>
<dbReference type="Bgee" id="ENSRNOG00000003504">
    <property type="expression patterns" value="Expressed in testis and 20 other cell types or tissues"/>
</dbReference>
<dbReference type="GO" id="GO:0005634">
    <property type="term" value="C:nucleus"/>
    <property type="evidence" value="ECO:0007669"/>
    <property type="project" value="UniProtKB-SubCell"/>
</dbReference>
<dbReference type="GO" id="GO:0032299">
    <property type="term" value="C:ribonuclease H2 complex"/>
    <property type="evidence" value="ECO:0000250"/>
    <property type="project" value="UniProtKB"/>
</dbReference>
<dbReference type="GO" id="GO:0046872">
    <property type="term" value="F:metal ion binding"/>
    <property type="evidence" value="ECO:0007669"/>
    <property type="project" value="UniProtKB-KW"/>
</dbReference>
<dbReference type="GO" id="GO:0003723">
    <property type="term" value="F:RNA binding"/>
    <property type="evidence" value="ECO:0007669"/>
    <property type="project" value="InterPro"/>
</dbReference>
<dbReference type="GO" id="GO:0004523">
    <property type="term" value="F:RNA-DNA hybrid ribonuclease activity"/>
    <property type="evidence" value="ECO:0000250"/>
    <property type="project" value="UniProtKB"/>
</dbReference>
<dbReference type="GO" id="GO:0043137">
    <property type="term" value="P:DNA replication, removal of RNA primer"/>
    <property type="evidence" value="ECO:0000318"/>
    <property type="project" value="GO_Central"/>
</dbReference>
<dbReference type="GO" id="GO:0006298">
    <property type="term" value="P:mismatch repair"/>
    <property type="evidence" value="ECO:0000266"/>
    <property type="project" value="RGD"/>
</dbReference>
<dbReference type="GO" id="GO:0006401">
    <property type="term" value="P:RNA catabolic process"/>
    <property type="evidence" value="ECO:0000250"/>
    <property type="project" value="UniProtKB"/>
</dbReference>
<dbReference type="CDD" id="cd07181">
    <property type="entry name" value="RNase_HII_eukaryota_like"/>
    <property type="match status" value="1"/>
</dbReference>
<dbReference type="FunFam" id="1.10.10.460:FF:000001">
    <property type="entry name" value="Ribonuclease"/>
    <property type="match status" value="1"/>
</dbReference>
<dbReference type="FunFam" id="3.30.420.10:FF:000016">
    <property type="entry name" value="Ribonuclease"/>
    <property type="match status" value="1"/>
</dbReference>
<dbReference type="Gene3D" id="3.30.420.10">
    <property type="entry name" value="Ribonuclease H-like superfamily/Ribonuclease H"/>
    <property type="match status" value="1"/>
</dbReference>
<dbReference type="Gene3D" id="1.10.10.460">
    <property type="entry name" value="Ribonuclease hii. Domain 2"/>
    <property type="match status" value="1"/>
</dbReference>
<dbReference type="InterPro" id="IPR004649">
    <property type="entry name" value="RNase_H2_suA"/>
</dbReference>
<dbReference type="InterPro" id="IPR001352">
    <property type="entry name" value="RNase_HII/HIII"/>
</dbReference>
<dbReference type="InterPro" id="IPR024567">
    <property type="entry name" value="RNase_HII/HIII_dom"/>
</dbReference>
<dbReference type="InterPro" id="IPR023160">
    <property type="entry name" value="RNase_HII_hlx-loop-hlx_cap_dom"/>
</dbReference>
<dbReference type="InterPro" id="IPR012337">
    <property type="entry name" value="RNaseH-like_sf"/>
</dbReference>
<dbReference type="InterPro" id="IPR036397">
    <property type="entry name" value="RNaseH_sf"/>
</dbReference>
<dbReference type="NCBIfam" id="TIGR00729">
    <property type="entry name" value="ribonuclease HII"/>
    <property type="match status" value="1"/>
</dbReference>
<dbReference type="PANTHER" id="PTHR10954">
    <property type="entry name" value="RIBONUCLEASE H2 SUBUNIT A"/>
    <property type="match status" value="1"/>
</dbReference>
<dbReference type="PANTHER" id="PTHR10954:SF7">
    <property type="entry name" value="RIBONUCLEASE H2 SUBUNIT A"/>
    <property type="match status" value="1"/>
</dbReference>
<dbReference type="Pfam" id="PF01351">
    <property type="entry name" value="RNase_HII"/>
    <property type="match status" value="1"/>
</dbReference>
<dbReference type="SUPFAM" id="SSF53098">
    <property type="entry name" value="Ribonuclease H-like"/>
    <property type="match status" value="1"/>
</dbReference>
<dbReference type="PROSITE" id="PS51975">
    <property type="entry name" value="RNASE_H_2"/>
    <property type="match status" value="1"/>
</dbReference>
<gene>
    <name type="primary">Rnaseh2a</name>
</gene>
<keyword id="KW-0007">Acetylation</keyword>
<keyword id="KW-0255">Endonuclease</keyword>
<keyword id="KW-0378">Hydrolase</keyword>
<keyword id="KW-0479">Metal-binding</keyword>
<keyword id="KW-0540">Nuclease</keyword>
<keyword id="KW-0539">Nucleus</keyword>
<keyword id="KW-0597">Phosphoprotein</keyword>
<keyword id="KW-1185">Reference proteome</keyword>
<feature type="chain" id="PRO_0000111712" description="Ribonuclease H2 subunit A">
    <location>
        <begin position="1"/>
        <end position="301"/>
    </location>
</feature>
<feature type="domain" description="RNase H type-2" evidence="4">
    <location>
        <begin position="28"/>
        <end position="251"/>
    </location>
</feature>
<feature type="binding site" evidence="1">
    <location>
        <position position="34"/>
    </location>
    <ligand>
        <name>a divalent metal cation</name>
        <dbReference type="ChEBI" id="CHEBI:60240"/>
    </ligand>
</feature>
<feature type="binding site" evidence="1">
    <location>
        <position position="35"/>
    </location>
    <ligand>
        <name>a divalent metal cation</name>
        <dbReference type="ChEBI" id="CHEBI:60240"/>
    </ligand>
</feature>
<feature type="binding site" evidence="1">
    <location>
        <position position="142"/>
    </location>
    <ligand>
        <name>a divalent metal cation</name>
        <dbReference type="ChEBI" id="CHEBI:60240"/>
    </ligand>
</feature>
<feature type="modified residue" description="N-acetylmethionine" evidence="2">
    <location>
        <position position="1"/>
    </location>
</feature>
<feature type="modified residue" description="Phosphothreonine" evidence="2">
    <location>
        <position position="217"/>
    </location>
</feature>
<feature type="modified residue" description="Phosphoserine" evidence="3">
    <location>
        <position position="258"/>
    </location>
</feature>
<protein>
    <recommendedName>
        <fullName>Ribonuclease H2 subunit A</fullName>
        <shortName>RNase H2 subunit A</shortName>
        <ecNumber>3.1.26.4</ecNumber>
    </recommendedName>
    <alternativeName>
        <fullName>Ribonuclease HI large subunit</fullName>
        <shortName>RNase HI large subunit</shortName>
    </alternativeName>
    <alternativeName>
        <fullName>Ribonuclease HI subunit A</fullName>
    </alternativeName>
</protein>